<evidence type="ECO:0000269" key="1">
    <source>
    </source>
</evidence>
<evidence type="ECO:0000269" key="2">
    <source>
    </source>
</evidence>
<evidence type="ECO:0000269" key="3">
    <source>
    </source>
</evidence>
<evidence type="ECO:0000269" key="4">
    <source>
    </source>
</evidence>
<evidence type="ECO:0000303" key="5">
    <source>
    </source>
</evidence>
<evidence type="ECO:0000305" key="6"/>
<evidence type="ECO:0000305" key="7">
    <source>
    </source>
</evidence>
<evidence type="ECO:0000312" key="8">
    <source>
        <dbReference type="PomBase" id="SPAC1250.04c"/>
    </source>
</evidence>
<evidence type="ECO:0007829" key="9">
    <source>
        <dbReference type="PDB" id="3GVA"/>
    </source>
</evidence>
<evidence type="ECO:0007829" key="10">
    <source>
        <dbReference type="PDB" id="3GX4"/>
    </source>
</evidence>
<evidence type="ECO:0007829" key="11">
    <source>
        <dbReference type="PDB" id="4ENJ"/>
    </source>
</evidence>
<evidence type="ECO:0007829" key="12">
    <source>
        <dbReference type="PDB" id="4ENN"/>
    </source>
</evidence>
<evidence type="ECO:0007829" key="13">
    <source>
        <dbReference type="PDB" id="4HDV"/>
    </source>
</evidence>
<accession>Q9UTN9</accession>
<gene>
    <name evidence="5" type="primary">atl1</name>
    <name evidence="8" type="ORF">SPAC1250.04c</name>
</gene>
<feature type="chain" id="PRO_0000249237" description="Alkyltransferase-like protein 1">
    <location>
        <begin position="1"/>
        <end position="108"/>
    </location>
</feature>
<feature type="site" description="Required for phosphate rotation/nucleotide flipping" evidence="7">
    <location>
        <position position="25"/>
    </location>
</feature>
<feature type="site" description="Arg finger, required for nucleotide flipping" evidence="7">
    <location>
        <position position="39"/>
    </location>
</feature>
<feature type="site" description="Critical for recognition of O(6)-alkylguanines, probes the electrostatic potential of the flipped base to distinguish between O(6)-alkylguanine and guanine" evidence="4">
    <location>
        <position position="69"/>
    </location>
</feature>
<feature type="mutagenesis site" description="Reduces discrimination of modified bases 10-100-fold and increases sensitivity toward alkylating agents." evidence="4">
    <original>R</original>
    <variation>A</variation>
    <variation>F</variation>
    <location>
        <position position="69"/>
    </location>
</feature>
<feature type="helix" evidence="9">
    <location>
        <begin position="3"/>
        <end position="14"/>
    </location>
</feature>
<feature type="strand" evidence="10">
    <location>
        <begin position="22"/>
        <end position="24"/>
    </location>
</feature>
<feature type="helix" evidence="9">
    <location>
        <begin position="25"/>
        <end position="31"/>
    </location>
</feature>
<feature type="helix" evidence="12">
    <location>
        <begin position="35"/>
        <end position="37"/>
    </location>
</feature>
<feature type="helix" evidence="9">
    <location>
        <begin position="38"/>
        <end position="46"/>
    </location>
</feature>
<feature type="helix" evidence="9">
    <location>
        <begin position="56"/>
        <end position="58"/>
    </location>
</feature>
<feature type="turn" evidence="11">
    <location>
        <begin position="62"/>
        <end position="64"/>
    </location>
</feature>
<feature type="strand" evidence="13">
    <location>
        <begin position="70"/>
        <end position="72"/>
    </location>
</feature>
<feature type="helix" evidence="9">
    <location>
        <begin position="73"/>
        <end position="84"/>
    </location>
</feature>
<feature type="strand" evidence="12">
    <location>
        <begin position="90"/>
        <end position="92"/>
    </location>
</feature>
<feature type="strand" evidence="10">
    <location>
        <begin position="93"/>
        <end position="95"/>
    </location>
</feature>
<feature type="helix" evidence="9">
    <location>
        <begin position="101"/>
        <end position="104"/>
    </location>
</feature>
<comment type="function">
    <text evidence="1 2 3 4">Involved in DNA damage recognition. Binds DNA containing O(6)-methylguanine and larger O(6)-alkylguanine adducts. The DNA is bent, the damaged base is rotated out of the DNA duplex into a hydrophobic binding pocket (nucleotide flipping), with Arg-39 donating a hydrogen bond to the orphaned cytosine to stabilize the extrahelical DNA conformation. This structural change in DNA presents the lesion to the nucleotide excision repair (NER) pathway (PubMed:16679453, PubMed:19516334, PubMed:23112169). The affinity for O(6)-alkylguanine adducts increases with the size of the alkyl group. Low affinity small O(6)-alkylguanines are directed to the global genome repair pathway of NER via rhp7-rhp16 and rhp41-rhp23, while strong binding to bulky O(6)-alkylguanines stalls the transcription machinery and diverts the damage to the transcription-coupled repair pathway of NER via rhp26 (PubMed:22658721).</text>
</comment>
<comment type="miscellaneous">
    <text evidence="2">Does not have alkyltransferase activity. A tryptophan residue replaces the cysteine at the known active site of MGMT.</text>
</comment>
<comment type="similarity">
    <text evidence="6">Belongs to the MGMT family. ATL subfamily.</text>
</comment>
<reference key="1">
    <citation type="journal article" date="2002" name="Nature">
        <title>The genome sequence of Schizosaccharomyces pombe.</title>
        <authorList>
            <person name="Wood V."/>
            <person name="Gwilliam R."/>
            <person name="Rajandream M.A."/>
            <person name="Lyne M.H."/>
            <person name="Lyne R."/>
            <person name="Stewart A."/>
            <person name="Sgouros J.G."/>
            <person name="Peat N."/>
            <person name="Hayles J."/>
            <person name="Baker S.G."/>
            <person name="Basham D."/>
            <person name="Bowman S."/>
            <person name="Brooks K."/>
            <person name="Brown D."/>
            <person name="Brown S."/>
            <person name="Chillingworth T."/>
            <person name="Churcher C.M."/>
            <person name="Collins M."/>
            <person name="Connor R."/>
            <person name="Cronin A."/>
            <person name="Davis P."/>
            <person name="Feltwell T."/>
            <person name="Fraser A."/>
            <person name="Gentles S."/>
            <person name="Goble A."/>
            <person name="Hamlin N."/>
            <person name="Harris D.E."/>
            <person name="Hidalgo J."/>
            <person name="Hodgson G."/>
            <person name="Holroyd S."/>
            <person name="Hornsby T."/>
            <person name="Howarth S."/>
            <person name="Huckle E.J."/>
            <person name="Hunt S."/>
            <person name="Jagels K."/>
            <person name="James K.D."/>
            <person name="Jones L."/>
            <person name="Jones M."/>
            <person name="Leather S."/>
            <person name="McDonald S."/>
            <person name="McLean J."/>
            <person name="Mooney P."/>
            <person name="Moule S."/>
            <person name="Mungall K.L."/>
            <person name="Murphy L.D."/>
            <person name="Niblett D."/>
            <person name="Odell C."/>
            <person name="Oliver K."/>
            <person name="O'Neil S."/>
            <person name="Pearson D."/>
            <person name="Quail M.A."/>
            <person name="Rabbinowitsch E."/>
            <person name="Rutherford K.M."/>
            <person name="Rutter S."/>
            <person name="Saunders D."/>
            <person name="Seeger K."/>
            <person name="Sharp S."/>
            <person name="Skelton J."/>
            <person name="Simmonds M.N."/>
            <person name="Squares R."/>
            <person name="Squares S."/>
            <person name="Stevens K."/>
            <person name="Taylor K."/>
            <person name="Taylor R.G."/>
            <person name="Tivey A."/>
            <person name="Walsh S.V."/>
            <person name="Warren T."/>
            <person name="Whitehead S."/>
            <person name="Woodward J.R."/>
            <person name="Volckaert G."/>
            <person name="Aert R."/>
            <person name="Robben J."/>
            <person name="Grymonprez B."/>
            <person name="Weltjens I."/>
            <person name="Vanstreels E."/>
            <person name="Rieger M."/>
            <person name="Schaefer M."/>
            <person name="Mueller-Auer S."/>
            <person name="Gabel C."/>
            <person name="Fuchs M."/>
            <person name="Duesterhoeft A."/>
            <person name="Fritzc C."/>
            <person name="Holzer E."/>
            <person name="Moestl D."/>
            <person name="Hilbert H."/>
            <person name="Borzym K."/>
            <person name="Langer I."/>
            <person name="Beck A."/>
            <person name="Lehrach H."/>
            <person name="Reinhardt R."/>
            <person name="Pohl T.M."/>
            <person name="Eger P."/>
            <person name="Zimmermann W."/>
            <person name="Wedler H."/>
            <person name="Wambutt R."/>
            <person name="Purnelle B."/>
            <person name="Goffeau A."/>
            <person name="Cadieu E."/>
            <person name="Dreano S."/>
            <person name="Gloux S."/>
            <person name="Lelaure V."/>
            <person name="Mottier S."/>
            <person name="Galibert F."/>
            <person name="Aves S.J."/>
            <person name="Xiang Z."/>
            <person name="Hunt C."/>
            <person name="Moore K."/>
            <person name="Hurst S.M."/>
            <person name="Lucas M."/>
            <person name="Rochet M."/>
            <person name="Gaillardin C."/>
            <person name="Tallada V.A."/>
            <person name="Garzon A."/>
            <person name="Thode G."/>
            <person name="Daga R.R."/>
            <person name="Cruzado L."/>
            <person name="Jimenez J."/>
            <person name="Sanchez M."/>
            <person name="del Rey F."/>
            <person name="Benito J."/>
            <person name="Dominguez A."/>
            <person name="Revuelta J.L."/>
            <person name="Moreno S."/>
            <person name="Armstrong J."/>
            <person name="Forsburg S.L."/>
            <person name="Cerutti L."/>
            <person name="Lowe T."/>
            <person name="McCombie W.R."/>
            <person name="Paulsen I."/>
            <person name="Potashkin J."/>
            <person name="Shpakovski G.V."/>
            <person name="Ussery D."/>
            <person name="Barrell B.G."/>
            <person name="Nurse P."/>
        </authorList>
    </citation>
    <scope>NUCLEOTIDE SEQUENCE [LARGE SCALE GENOMIC DNA]</scope>
    <source>
        <strain>972 / ATCC 24843</strain>
    </source>
</reference>
<reference key="2">
    <citation type="journal article" date="2006" name="Nucleic Acids Res.">
        <title>A novel DNA damage recognition protein in Schizosaccharomyces pombe.</title>
        <authorList>
            <person name="Pearson S.J."/>
            <person name="Wharton S."/>
            <person name="Watson A.J."/>
            <person name="Begum G."/>
            <person name="Butt A."/>
            <person name="Glynn N."/>
            <person name="Williams D.M."/>
            <person name="Shibata T."/>
            <person name="Santibanez-Koref M.F."/>
            <person name="Margison G.P."/>
        </authorList>
    </citation>
    <scope>FUNCTION</scope>
</reference>
<reference key="3">
    <citation type="journal article" date="2009" name="Nature">
        <title>Flipping of alkylated DNA damage bridges base and nucleotide excision repair.</title>
        <authorList>
            <person name="Tubbs J.L."/>
            <person name="Latypov V."/>
            <person name="Kanugula S."/>
            <person name="Butt A."/>
            <person name="Melikishvili M."/>
            <person name="Kraehenbuehl R."/>
            <person name="Fleck O."/>
            <person name="Marriott A."/>
            <person name="Watson A.J."/>
            <person name="Verbeek B."/>
            <person name="McGown G."/>
            <person name="Thorncroft M."/>
            <person name="Santibanez-Koref M.F."/>
            <person name="Millington C."/>
            <person name="Arvai A.S."/>
            <person name="Kroeger M.D."/>
            <person name="Peterson L.A."/>
            <person name="Williams D.M."/>
            <person name="Fried M.G."/>
            <person name="Margison G.P."/>
            <person name="Pegg A.E."/>
            <person name="Tainer J.A."/>
        </authorList>
    </citation>
    <scope>X-RAY CRYSTALLOGRAPHY (2.00 ANGSTROMS) IN COMPLEX WITH SUBSTRATE DNA</scope>
    <scope>FUNCTION</scope>
</reference>
<reference key="4">
    <citation type="journal article" date="2012" name="Mol. Cell">
        <title>Atl1 regulates choice between global genome and transcription-coupled repair of O(6)-alkylguanines.</title>
        <authorList>
            <person name="Latypov V.F."/>
            <person name="Tubbs J.L."/>
            <person name="Watson A.J."/>
            <person name="Marriott A.S."/>
            <person name="McGown G."/>
            <person name="Thorncroft M."/>
            <person name="Wilkinson O.J."/>
            <person name="Senthong P."/>
            <person name="Butt A."/>
            <person name="Arvai A.S."/>
            <person name="Millington C.L."/>
            <person name="Povey A.C."/>
            <person name="Williams D.M."/>
            <person name="Santibanez-Koref M.F."/>
            <person name="Tainer J.A."/>
            <person name="Margison G.P."/>
        </authorList>
    </citation>
    <scope>X-RAY CRYSTALLOGRAPHY (2.84 ANGSTROMS)</scope>
    <scope>FUNCTION</scope>
</reference>
<reference key="5">
    <citation type="journal article" date="2012" name="Proc. Natl. Acad. Sci. U.S.A.">
        <title>Alkyltransferase-like protein (Atl1) distinguishes alkylated guanines for DNA repair using cation-pi interactions.</title>
        <authorList>
            <person name="Wilkinson O.J."/>
            <person name="Latypov V."/>
            <person name="Tubbs J.L."/>
            <person name="Millington C.L."/>
            <person name="Morita R."/>
            <person name="Blackburn H."/>
            <person name="Marriott A."/>
            <person name="McGown G."/>
            <person name="Thorncroft M."/>
            <person name="Watson A.J."/>
            <person name="Connolly B.A."/>
            <person name="Grasby J.A."/>
            <person name="Masui R."/>
            <person name="Hunter C.A."/>
            <person name="Tainer J.A."/>
            <person name="Margison G.P."/>
            <person name="Williams D.M."/>
        </authorList>
    </citation>
    <scope>X-RAY CRYSTALLOGRAPHY (2.70 ANGSTROMS)</scope>
    <scope>FUNCTION</scope>
    <scope>MUTAGENESIS OF ARG-69</scope>
</reference>
<name>ATL1_SCHPO</name>
<dbReference type="EMBL" id="CU329670">
    <property type="protein sequence ID" value="CAB54827.1"/>
    <property type="molecule type" value="Genomic_DNA"/>
</dbReference>
<dbReference type="PIR" id="T37558">
    <property type="entry name" value="T37558"/>
</dbReference>
<dbReference type="RefSeq" id="NP_594858.1">
    <property type="nucleotide sequence ID" value="NM_001020287.2"/>
</dbReference>
<dbReference type="PDB" id="3GVA">
    <property type="method" value="X-ray"/>
    <property type="resolution" value="2.00 A"/>
    <property type="chains" value="A/B=1-108"/>
</dbReference>
<dbReference type="PDB" id="3GX4">
    <property type="method" value="X-ray"/>
    <property type="resolution" value="2.70 A"/>
    <property type="chains" value="X=1-108"/>
</dbReference>
<dbReference type="PDB" id="3GYH">
    <property type="method" value="X-ray"/>
    <property type="resolution" value="2.80 A"/>
    <property type="chains" value="X=1-108"/>
</dbReference>
<dbReference type="PDB" id="4ENJ">
    <property type="method" value="X-ray"/>
    <property type="resolution" value="3.10 A"/>
    <property type="chains" value="A=1-108"/>
</dbReference>
<dbReference type="PDB" id="4ENK">
    <property type="method" value="X-ray"/>
    <property type="resolution" value="3.04 A"/>
    <property type="chains" value="A=1-108"/>
</dbReference>
<dbReference type="PDB" id="4ENM">
    <property type="method" value="X-ray"/>
    <property type="resolution" value="2.84 A"/>
    <property type="chains" value="A=1-108"/>
</dbReference>
<dbReference type="PDB" id="4ENN">
    <property type="method" value="X-ray"/>
    <property type="resolution" value="2.84 A"/>
    <property type="chains" value="A/B=1-108"/>
</dbReference>
<dbReference type="PDB" id="4HDU">
    <property type="method" value="X-ray"/>
    <property type="resolution" value="2.85 A"/>
    <property type="chains" value="A=1-108"/>
</dbReference>
<dbReference type="PDB" id="4HDV">
    <property type="method" value="X-ray"/>
    <property type="resolution" value="2.70 A"/>
    <property type="chains" value="A=1-108"/>
</dbReference>
<dbReference type="PDBsum" id="3GVA"/>
<dbReference type="PDBsum" id="3GX4"/>
<dbReference type="PDBsum" id="3GYH"/>
<dbReference type="PDBsum" id="4ENJ"/>
<dbReference type="PDBsum" id="4ENK"/>
<dbReference type="PDBsum" id="4ENM"/>
<dbReference type="PDBsum" id="4ENN"/>
<dbReference type="PDBsum" id="4HDU"/>
<dbReference type="PDBsum" id="4HDV"/>
<dbReference type="SMR" id="Q9UTN9"/>
<dbReference type="BioGRID" id="278199">
    <property type="interactions" value="19"/>
</dbReference>
<dbReference type="DIP" id="DIP-60450N"/>
<dbReference type="IntAct" id="Q9UTN9">
    <property type="interactions" value="1"/>
</dbReference>
<dbReference type="STRING" id="284812.Q9UTN9"/>
<dbReference type="PaxDb" id="4896-SPAC1250.04c.1"/>
<dbReference type="EnsemblFungi" id="SPAC1250.04c.1">
    <property type="protein sequence ID" value="SPAC1250.04c.1:pep"/>
    <property type="gene ID" value="SPAC1250.04c"/>
</dbReference>
<dbReference type="GeneID" id="2541704"/>
<dbReference type="KEGG" id="spo:2541704"/>
<dbReference type="PomBase" id="SPAC1250.04c">
    <property type="gene designation" value="atl1"/>
</dbReference>
<dbReference type="VEuPathDB" id="FungiDB:SPAC1250.04c"/>
<dbReference type="eggNOG" id="KOG4062">
    <property type="taxonomic scope" value="Eukaryota"/>
</dbReference>
<dbReference type="HOGENOM" id="CLU_000445_52_5_1"/>
<dbReference type="InParanoid" id="Q9UTN9"/>
<dbReference type="OMA" id="DEAEWWF"/>
<dbReference type="PhylomeDB" id="Q9UTN9"/>
<dbReference type="EvolutionaryTrace" id="Q9UTN9"/>
<dbReference type="PRO" id="PR:Q9UTN9"/>
<dbReference type="Proteomes" id="UP000002485">
    <property type="component" value="Chromosome I"/>
</dbReference>
<dbReference type="GO" id="GO:0005829">
    <property type="term" value="C:cytosol"/>
    <property type="evidence" value="ECO:0007005"/>
    <property type="project" value="PomBase"/>
</dbReference>
<dbReference type="GO" id="GO:0005634">
    <property type="term" value="C:nucleus"/>
    <property type="evidence" value="ECO:0007005"/>
    <property type="project" value="PomBase"/>
</dbReference>
<dbReference type="GO" id="GO:0003824">
    <property type="term" value="F:catalytic activity"/>
    <property type="evidence" value="ECO:0007669"/>
    <property type="project" value="InterPro"/>
</dbReference>
<dbReference type="GO" id="GO:0003684">
    <property type="term" value="F:damaged DNA binding"/>
    <property type="evidence" value="ECO:0000314"/>
    <property type="project" value="PomBase"/>
</dbReference>
<dbReference type="GO" id="GO:0032132">
    <property type="term" value="F:O6-alkylguanine-DNA binding"/>
    <property type="evidence" value="ECO:0000314"/>
    <property type="project" value="PomBase"/>
</dbReference>
<dbReference type="GO" id="GO:0070911">
    <property type="term" value="P:global genome nucleotide-excision repair"/>
    <property type="evidence" value="ECO:0000315"/>
    <property type="project" value="PomBase"/>
</dbReference>
<dbReference type="GO" id="GO:0006283">
    <property type="term" value="P:transcription-coupled nucleotide-excision repair"/>
    <property type="evidence" value="ECO:0000315"/>
    <property type="project" value="PomBase"/>
</dbReference>
<dbReference type="CDD" id="cd06445">
    <property type="entry name" value="ATase"/>
    <property type="match status" value="1"/>
</dbReference>
<dbReference type="Gene3D" id="1.10.10.10">
    <property type="entry name" value="Winged helix-like DNA-binding domain superfamily/Winged helix DNA-binding domain"/>
    <property type="match status" value="1"/>
</dbReference>
<dbReference type="InterPro" id="IPR052520">
    <property type="entry name" value="ATL_DNA_repair"/>
</dbReference>
<dbReference type="InterPro" id="IPR014048">
    <property type="entry name" value="MethylDNA_cys_MeTrfase_DNA-bd"/>
</dbReference>
<dbReference type="InterPro" id="IPR036217">
    <property type="entry name" value="MethylDNA_cys_MeTrfase_DNAb"/>
</dbReference>
<dbReference type="InterPro" id="IPR036388">
    <property type="entry name" value="WH-like_DNA-bd_sf"/>
</dbReference>
<dbReference type="NCBIfam" id="TIGR00589">
    <property type="entry name" value="ogt"/>
    <property type="match status" value="1"/>
</dbReference>
<dbReference type="PANTHER" id="PTHR42942">
    <property type="entry name" value="6-O-METHYLGUANINE DNA METHYLTRANSFERASE"/>
    <property type="match status" value="1"/>
</dbReference>
<dbReference type="PANTHER" id="PTHR42942:SF1">
    <property type="entry name" value="ALKYLTRANSFERASE-LIKE PROTEIN 1"/>
    <property type="match status" value="1"/>
</dbReference>
<dbReference type="Pfam" id="PF01035">
    <property type="entry name" value="DNA_binding_1"/>
    <property type="match status" value="1"/>
</dbReference>
<dbReference type="SUPFAM" id="SSF46767">
    <property type="entry name" value="Methylated DNA-protein cysteine methyltransferase, C-terminal domain"/>
    <property type="match status" value="1"/>
</dbReference>
<protein>
    <recommendedName>
        <fullName evidence="5">Alkyltransferase-like protein 1</fullName>
    </recommendedName>
</protein>
<organism>
    <name type="scientific">Schizosaccharomyces pombe (strain 972 / ATCC 24843)</name>
    <name type="common">Fission yeast</name>
    <dbReference type="NCBI Taxonomy" id="284812"/>
    <lineage>
        <taxon>Eukaryota</taxon>
        <taxon>Fungi</taxon>
        <taxon>Dikarya</taxon>
        <taxon>Ascomycota</taxon>
        <taxon>Taphrinomycotina</taxon>
        <taxon>Schizosaccharomycetes</taxon>
        <taxon>Schizosaccharomycetales</taxon>
        <taxon>Schizosaccharomycetaceae</taxon>
        <taxon>Schizosaccharomyces</taxon>
    </lineage>
</organism>
<keyword id="KW-0002">3D-structure</keyword>
<keyword id="KW-0227">DNA damage</keyword>
<keyword id="KW-0234">DNA repair</keyword>
<keyword id="KW-0238">DNA-binding</keyword>
<keyword id="KW-1185">Reference proteome</keyword>
<proteinExistence type="evidence at protein level"/>
<sequence length="108" mass="12670">MRMDEFYTKVYDAVCEIPYGKVSTYGEIARYVGMPSYARQVGQAMKHLHPETHVPWHRVINSRGTISKRDISAGEQRQKDRLEEEGVEIYQTSLGEYKLNLPEYMWKP</sequence>